<gene>
    <name evidence="1" type="primary">ligA</name>
    <name type="ordered locus">BCQ_0357</name>
</gene>
<name>DNLJ_BACCQ</name>
<organism>
    <name type="scientific">Bacillus cereus (strain Q1)</name>
    <dbReference type="NCBI Taxonomy" id="361100"/>
    <lineage>
        <taxon>Bacteria</taxon>
        <taxon>Bacillati</taxon>
        <taxon>Bacillota</taxon>
        <taxon>Bacilli</taxon>
        <taxon>Bacillales</taxon>
        <taxon>Bacillaceae</taxon>
        <taxon>Bacillus</taxon>
        <taxon>Bacillus cereus group</taxon>
    </lineage>
</organism>
<dbReference type="EC" id="6.5.1.2" evidence="1"/>
<dbReference type="EMBL" id="CP000227">
    <property type="protein sequence ID" value="ACM10829.1"/>
    <property type="status" value="ALT_INIT"/>
    <property type="molecule type" value="Genomic_DNA"/>
</dbReference>
<dbReference type="SMR" id="B9J1L6"/>
<dbReference type="KEGG" id="bcq:BCQ_0357"/>
<dbReference type="HOGENOM" id="CLU_007764_2_1_9"/>
<dbReference type="Proteomes" id="UP000000441">
    <property type="component" value="Chromosome"/>
</dbReference>
<dbReference type="GO" id="GO:0005829">
    <property type="term" value="C:cytosol"/>
    <property type="evidence" value="ECO:0007669"/>
    <property type="project" value="TreeGrafter"/>
</dbReference>
<dbReference type="GO" id="GO:0003677">
    <property type="term" value="F:DNA binding"/>
    <property type="evidence" value="ECO:0007669"/>
    <property type="project" value="InterPro"/>
</dbReference>
<dbReference type="GO" id="GO:0003911">
    <property type="term" value="F:DNA ligase (NAD+) activity"/>
    <property type="evidence" value="ECO:0007669"/>
    <property type="project" value="UniProtKB-UniRule"/>
</dbReference>
<dbReference type="GO" id="GO:0046872">
    <property type="term" value="F:metal ion binding"/>
    <property type="evidence" value="ECO:0007669"/>
    <property type="project" value="UniProtKB-KW"/>
</dbReference>
<dbReference type="GO" id="GO:0006281">
    <property type="term" value="P:DNA repair"/>
    <property type="evidence" value="ECO:0007669"/>
    <property type="project" value="UniProtKB-KW"/>
</dbReference>
<dbReference type="GO" id="GO:0006260">
    <property type="term" value="P:DNA replication"/>
    <property type="evidence" value="ECO:0007669"/>
    <property type="project" value="UniProtKB-KW"/>
</dbReference>
<dbReference type="CDD" id="cd17748">
    <property type="entry name" value="BRCT_DNA_ligase_like"/>
    <property type="match status" value="1"/>
</dbReference>
<dbReference type="CDD" id="cd00114">
    <property type="entry name" value="LIGANc"/>
    <property type="match status" value="1"/>
</dbReference>
<dbReference type="FunFam" id="1.10.150.20:FF:000006">
    <property type="entry name" value="DNA ligase"/>
    <property type="match status" value="1"/>
</dbReference>
<dbReference type="FunFam" id="1.10.150.20:FF:000007">
    <property type="entry name" value="DNA ligase"/>
    <property type="match status" value="1"/>
</dbReference>
<dbReference type="FunFam" id="1.10.287.610:FF:000002">
    <property type="entry name" value="DNA ligase"/>
    <property type="match status" value="1"/>
</dbReference>
<dbReference type="FunFam" id="2.40.50.140:FF:000012">
    <property type="entry name" value="DNA ligase"/>
    <property type="match status" value="1"/>
</dbReference>
<dbReference type="FunFam" id="3.30.470.30:FF:000001">
    <property type="entry name" value="DNA ligase"/>
    <property type="match status" value="1"/>
</dbReference>
<dbReference type="FunFam" id="3.40.50.10190:FF:000026">
    <property type="entry name" value="DNA ligase"/>
    <property type="match status" value="1"/>
</dbReference>
<dbReference type="FunFam" id="6.20.10.30:FF:000002">
    <property type="entry name" value="DNA ligase"/>
    <property type="match status" value="1"/>
</dbReference>
<dbReference type="Gene3D" id="6.20.10.30">
    <property type="match status" value="1"/>
</dbReference>
<dbReference type="Gene3D" id="1.10.150.20">
    <property type="entry name" value="5' to 3' exonuclease, C-terminal subdomain"/>
    <property type="match status" value="2"/>
</dbReference>
<dbReference type="Gene3D" id="3.40.50.10190">
    <property type="entry name" value="BRCT domain"/>
    <property type="match status" value="1"/>
</dbReference>
<dbReference type="Gene3D" id="3.30.470.30">
    <property type="entry name" value="DNA ligase/mRNA capping enzyme"/>
    <property type="match status" value="1"/>
</dbReference>
<dbReference type="Gene3D" id="1.10.287.610">
    <property type="entry name" value="Helix hairpin bin"/>
    <property type="match status" value="1"/>
</dbReference>
<dbReference type="Gene3D" id="2.40.50.140">
    <property type="entry name" value="Nucleic acid-binding proteins"/>
    <property type="match status" value="1"/>
</dbReference>
<dbReference type="HAMAP" id="MF_01588">
    <property type="entry name" value="DNA_ligase_A"/>
    <property type="match status" value="1"/>
</dbReference>
<dbReference type="InterPro" id="IPR001357">
    <property type="entry name" value="BRCT_dom"/>
</dbReference>
<dbReference type="InterPro" id="IPR036420">
    <property type="entry name" value="BRCT_dom_sf"/>
</dbReference>
<dbReference type="InterPro" id="IPR041663">
    <property type="entry name" value="DisA/LigA_HHH"/>
</dbReference>
<dbReference type="InterPro" id="IPR001679">
    <property type="entry name" value="DNA_ligase"/>
</dbReference>
<dbReference type="InterPro" id="IPR018239">
    <property type="entry name" value="DNA_ligase_AS"/>
</dbReference>
<dbReference type="InterPro" id="IPR033136">
    <property type="entry name" value="DNA_ligase_CS"/>
</dbReference>
<dbReference type="InterPro" id="IPR013839">
    <property type="entry name" value="DNAligase_adenylation"/>
</dbReference>
<dbReference type="InterPro" id="IPR013840">
    <property type="entry name" value="DNAligase_N"/>
</dbReference>
<dbReference type="InterPro" id="IPR003583">
    <property type="entry name" value="Hlx-hairpin-Hlx_DNA-bd_motif"/>
</dbReference>
<dbReference type="InterPro" id="IPR012340">
    <property type="entry name" value="NA-bd_OB-fold"/>
</dbReference>
<dbReference type="InterPro" id="IPR004150">
    <property type="entry name" value="NAD_DNA_ligase_OB"/>
</dbReference>
<dbReference type="InterPro" id="IPR010994">
    <property type="entry name" value="RuvA_2-like"/>
</dbReference>
<dbReference type="InterPro" id="IPR004149">
    <property type="entry name" value="Znf_DNAligase_C4"/>
</dbReference>
<dbReference type="NCBIfam" id="TIGR00575">
    <property type="entry name" value="dnlj"/>
    <property type="match status" value="1"/>
</dbReference>
<dbReference type="NCBIfam" id="NF005932">
    <property type="entry name" value="PRK07956.1"/>
    <property type="match status" value="1"/>
</dbReference>
<dbReference type="PANTHER" id="PTHR23389">
    <property type="entry name" value="CHROMOSOME TRANSMISSION FIDELITY FACTOR 18"/>
    <property type="match status" value="1"/>
</dbReference>
<dbReference type="PANTHER" id="PTHR23389:SF9">
    <property type="entry name" value="DNA LIGASE"/>
    <property type="match status" value="1"/>
</dbReference>
<dbReference type="Pfam" id="PF00533">
    <property type="entry name" value="BRCT"/>
    <property type="match status" value="1"/>
</dbReference>
<dbReference type="Pfam" id="PF01653">
    <property type="entry name" value="DNA_ligase_aden"/>
    <property type="match status" value="1"/>
</dbReference>
<dbReference type="Pfam" id="PF03120">
    <property type="entry name" value="DNA_ligase_OB"/>
    <property type="match status" value="1"/>
</dbReference>
<dbReference type="Pfam" id="PF03119">
    <property type="entry name" value="DNA_ligase_ZBD"/>
    <property type="match status" value="1"/>
</dbReference>
<dbReference type="Pfam" id="PF12826">
    <property type="entry name" value="HHH_2"/>
    <property type="match status" value="1"/>
</dbReference>
<dbReference type="Pfam" id="PF14520">
    <property type="entry name" value="HHH_5"/>
    <property type="match status" value="1"/>
</dbReference>
<dbReference type="Pfam" id="PF22745">
    <property type="entry name" value="Nlig-Ia"/>
    <property type="match status" value="1"/>
</dbReference>
<dbReference type="PIRSF" id="PIRSF001604">
    <property type="entry name" value="LigA"/>
    <property type="match status" value="1"/>
</dbReference>
<dbReference type="SMART" id="SM00292">
    <property type="entry name" value="BRCT"/>
    <property type="match status" value="1"/>
</dbReference>
<dbReference type="SMART" id="SM00278">
    <property type="entry name" value="HhH1"/>
    <property type="match status" value="3"/>
</dbReference>
<dbReference type="SMART" id="SM00532">
    <property type="entry name" value="LIGANc"/>
    <property type="match status" value="1"/>
</dbReference>
<dbReference type="SUPFAM" id="SSF52113">
    <property type="entry name" value="BRCT domain"/>
    <property type="match status" value="1"/>
</dbReference>
<dbReference type="SUPFAM" id="SSF56091">
    <property type="entry name" value="DNA ligase/mRNA capping enzyme, catalytic domain"/>
    <property type="match status" value="1"/>
</dbReference>
<dbReference type="SUPFAM" id="SSF50249">
    <property type="entry name" value="Nucleic acid-binding proteins"/>
    <property type="match status" value="1"/>
</dbReference>
<dbReference type="SUPFAM" id="SSF47781">
    <property type="entry name" value="RuvA domain 2-like"/>
    <property type="match status" value="1"/>
</dbReference>
<dbReference type="PROSITE" id="PS50172">
    <property type="entry name" value="BRCT"/>
    <property type="match status" value="1"/>
</dbReference>
<dbReference type="PROSITE" id="PS01055">
    <property type="entry name" value="DNA_LIGASE_N1"/>
    <property type="match status" value="1"/>
</dbReference>
<dbReference type="PROSITE" id="PS01056">
    <property type="entry name" value="DNA_LIGASE_N2"/>
    <property type="match status" value="1"/>
</dbReference>
<keyword id="KW-0227">DNA damage</keyword>
<keyword id="KW-0234">DNA repair</keyword>
<keyword id="KW-0235">DNA replication</keyword>
<keyword id="KW-0436">Ligase</keyword>
<keyword id="KW-0460">Magnesium</keyword>
<keyword id="KW-0464">Manganese</keyword>
<keyword id="KW-0479">Metal-binding</keyword>
<keyword id="KW-0520">NAD</keyword>
<keyword id="KW-0862">Zinc</keyword>
<proteinExistence type="inferred from homology"/>
<feature type="chain" id="PRO_0000380304" description="DNA ligase">
    <location>
        <begin position="1"/>
        <end position="669"/>
    </location>
</feature>
<feature type="domain" description="BRCT" evidence="1">
    <location>
        <begin position="591"/>
        <end position="669"/>
    </location>
</feature>
<feature type="active site" description="N6-AMP-lysine intermediate" evidence="1">
    <location>
        <position position="116"/>
    </location>
</feature>
<feature type="binding site" evidence="1">
    <location>
        <begin position="34"/>
        <end position="38"/>
    </location>
    <ligand>
        <name>NAD(+)</name>
        <dbReference type="ChEBI" id="CHEBI:57540"/>
    </ligand>
</feature>
<feature type="binding site" evidence="1">
    <location>
        <begin position="83"/>
        <end position="84"/>
    </location>
    <ligand>
        <name>NAD(+)</name>
        <dbReference type="ChEBI" id="CHEBI:57540"/>
    </ligand>
</feature>
<feature type="binding site" evidence="1">
    <location>
        <position position="114"/>
    </location>
    <ligand>
        <name>NAD(+)</name>
        <dbReference type="ChEBI" id="CHEBI:57540"/>
    </ligand>
</feature>
<feature type="binding site" evidence="1">
    <location>
        <position position="137"/>
    </location>
    <ligand>
        <name>NAD(+)</name>
        <dbReference type="ChEBI" id="CHEBI:57540"/>
    </ligand>
</feature>
<feature type="binding site" evidence="1">
    <location>
        <position position="171"/>
    </location>
    <ligand>
        <name>NAD(+)</name>
        <dbReference type="ChEBI" id="CHEBI:57540"/>
    </ligand>
</feature>
<feature type="binding site" evidence="1">
    <location>
        <position position="287"/>
    </location>
    <ligand>
        <name>NAD(+)</name>
        <dbReference type="ChEBI" id="CHEBI:57540"/>
    </ligand>
</feature>
<feature type="binding site" evidence="1">
    <location>
        <position position="311"/>
    </location>
    <ligand>
        <name>NAD(+)</name>
        <dbReference type="ChEBI" id="CHEBI:57540"/>
    </ligand>
</feature>
<feature type="binding site" evidence="1">
    <location>
        <position position="405"/>
    </location>
    <ligand>
        <name>Zn(2+)</name>
        <dbReference type="ChEBI" id="CHEBI:29105"/>
    </ligand>
</feature>
<feature type="binding site" evidence="1">
    <location>
        <position position="408"/>
    </location>
    <ligand>
        <name>Zn(2+)</name>
        <dbReference type="ChEBI" id="CHEBI:29105"/>
    </ligand>
</feature>
<feature type="binding site" evidence="1">
    <location>
        <position position="423"/>
    </location>
    <ligand>
        <name>Zn(2+)</name>
        <dbReference type="ChEBI" id="CHEBI:29105"/>
    </ligand>
</feature>
<feature type="binding site" evidence="1">
    <location>
        <position position="428"/>
    </location>
    <ligand>
        <name>Zn(2+)</name>
        <dbReference type="ChEBI" id="CHEBI:29105"/>
    </ligand>
</feature>
<evidence type="ECO:0000255" key="1">
    <source>
        <dbReference type="HAMAP-Rule" id="MF_01588"/>
    </source>
</evidence>
<evidence type="ECO:0000305" key="2"/>
<reference key="1">
    <citation type="journal article" date="2009" name="J. Bacteriol.">
        <title>Complete genome sequence of the extremophilic Bacillus cereus strain Q1 with industrial applications.</title>
        <authorList>
            <person name="Xiong Z."/>
            <person name="Jiang Y."/>
            <person name="Qi D."/>
            <person name="Lu H."/>
            <person name="Yang F."/>
            <person name="Yang J."/>
            <person name="Chen L."/>
            <person name="Sun L."/>
            <person name="Xu X."/>
            <person name="Xue Y."/>
            <person name="Zhu Y."/>
            <person name="Jin Q."/>
        </authorList>
    </citation>
    <scope>NUCLEOTIDE SEQUENCE [LARGE SCALE GENOMIC DNA]</scope>
    <source>
        <strain>Q1</strain>
    </source>
</reference>
<sequence>MSKEIAKKRIEELRDLLNTFNYQYHVLDNPSVSDAEYDRNMQELIKLEAENPEFMSEDSPSVRVGGTVLDIFEKVTHKSPMLSLGNAFNEGDLRDFDRRVRQGIDDANVRYICELKIDGLAVSLHYEKGRFIQGATRGDGVTGEDITQNLKTIKAIPLRLNEEVTLEARGEAYMPKRSFVKLNEEKEQNGEDVFANPRNAAAGSIRQLDPKIAAKRNLSMFVYGLANVEEKTILSHSESLDFLGELGFKTNPNRRTCETIEEVIAYVEEWQEKRPHLDYEIDGIVIKVDDVALQESLGTTAKSPRWAIAYKFPAEEVVTRLTGIELSVGRTGVVTPTAELEPVRVAGTIVRRASLHNEDLIREKDIRIGDYVVVKKAGDIIPEVVNVLFDKRTGEEEEYHMPTHCPACESELVRLEEEVALRCINPTCPAQIREGLIHFVSRNAMNIDGLGERVITQLFEADYIRTFADLYSLTKEQLLQLERFGEKSATNLVQAIENSKENSLERLLFGLGIRHVGAKAARTFAEHFETMDALVKATEEELKAINEIGEKMAQSVVAYFDNEDVLELLQQFKEYGVNMTYKGMKIADLQNVESYFAGKTVVLTGKLEVMGRSEAKKKIEALGGKVTGSVSKSTDLVVAGEAAGSKLAQAEKHNVEVWNEERFLQELNK</sequence>
<protein>
    <recommendedName>
        <fullName evidence="1">DNA ligase</fullName>
        <ecNumber evidence="1">6.5.1.2</ecNumber>
    </recommendedName>
    <alternativeName>
        <fullName evidence="1">Polydeoxyribonucleotide synthase [NAD(+)]</fullName>
    </alternativeName>
</protein>
<comment type="function">
    <text evidence="1">DNA ligase that catalyzes the formation of phosphodiester linkages between 5'-phosphoryl and 3'-hydroxyl groups in double-stranded DNA using NAD as a coenzyme and as the energy source for the reaction. It is essential for DNA replication and repair of damaged DNA.</text>
</comment>
<comment type="catalytic activity">
    <reaction evidence="1">
        <text>NAD(+) + (deoxyribonucleotide)n-3'-hydroxyl + 5'-phospho-(deoxyribonucleotide)m = (deoxyribonucleotide)n+m + AMP + beta-nicotinamide D-nucleotide.</text>
        <dbReference type="EC" id="6.5.1.2"/>
    </reaction>
</comment>
<comment type="cofactor">
    <cofactor evidence="1">
        <name>Mg(2+)</name>
        <dbReference type="ChEBI" id="CHEBI:18420"/>
    </cofactor>
    <cofactor evidence="1">
        <name>Mn(2+)</name>
        <dbReference type="ChEBI" id="CHEBI:29035"/>
    </cofactor>
</comment>
<comment type="similarity">
    <text evidence="1">Belongs to the NAD-dependent DNA ligase family. LigA subfamily.</text>
</comment>
<comment type="sequence caution" evidence="2">
    <conflict type="erroneous initiation">
        <sequence resource="EMBL-CDS" id="ACM10829"/>
    </conflict>
</comment>
<accession>B9J1L6</accession>